<accession>Q4K9A4</accession>
<organism>
    <name type="scientific">Pseudomonas fluorescens (strain ATCC BAA-477 / NRRL B-23932 / Pf-5)</name>
    <dbReference type="NCBI Taxonomy" id="220664"/>
    <lineage>
        <taxon>Bacteria</taxon>
        <taxon>Pseudomonadati</taxon>
        <taxon>Pseudomonadota</taxon>
        <taxon>Gammaproteobacteria</taxon>
        <taxon>Pseudomonadales</taxon>
        <taxon>Pseudomonadaceae</taxon>
        <taxon>Pseudomonas</taxon>
    </lineage>
</organism>
<evidence type="ECO:0000250" key="1">
    <source>
        <dbReference type="UniProtKB" id="Q88F88"/>
    </source>
</evidence>
<evidence type="ECO:0000250" key="2">
    <source>
        <dbReference type="UniProtKB" id="Q9I191"/>
    </source>
</evidence>
<evidence type="ECO:0000255" key="3"/>
<evidence type="ECO:0000255" key="4">
    <source>
        <dbReference type="PROSITE-ProRule" id="PRU00434"/>
    </source>
</evidence>
<evidence type="ECO:0000305" key="5"/>
<name>PVDT_PSEF5</name>
<gene>
    <name evidence="1" type="primary">pvdT</name>
    <name type="ordered locus">PFL_4082</name>
</gene>
<dbReference type="EC" id="7.6.2.-" evidence="1"/>
<dbReference type="EMBL" id="CP000076">
    <property type="protein sequence ID" value="AAY93343.1"/>
    <property type="molecule type" value="Genomic_DNA"/>
</dbReference>
<dbReference type="RefSeq" id="WP_011062363.1">
    <property type="nucleotide sequence ID" value="NC_004129.6"/>
</dbReference>
<dbReference type="SMR" id="Q4K9A4"/>
<dbReference type="STRING" id="220664.PFL_4082"/>
<dbReference type="KEGG" id="pfl:PFL_4082"/>
<dbReference type="PATRIC" id="fig|220664.5.peg.4181"/>
<dbReference type="eggNOG" id="COG0577">
    <property type="taxonomic scope" value="Bacteria"/>
</dbReference>
<dbReference type="eggNOG" id="COG1136">
    <property type="taxonomic scope" value="Bacteria"/>
</dbReference>
<dbReference type="HOGENOM" id="CLU_000604_78_2_6"/>
<dbReference type="Proteomes" id="UP000008540">
    <property type="component" value="Chromosome"/>
</dbReference>
<dbReference type="GO" id="GO:0005886">
    <property type="term" value="C:plasma membrane"/>
    <property type="evidence" value="ECO:0007669"/>
    <property type="project" value="UniProtKB-SubCell"/>
</dbReference>
<dbReference type="GO" id="GO:0005524">
    <property type="term" value="F:ATP binding"/>
    <property type="evidence" value="ECO:0007669"/>
    <property type="project" value="UniProtKB-KW"/>
</dbReference>
<dbReference type="GO" id="GO:0016887">
    <property type="term" value="F:ATP hydrolysis activity"/>
    <property type="evidence" value="ECO:0007669"/>
    <property type="project" value="InterPro"/>
</dbReference>
<dbReference type="GO" id="GO:0022857">
    <property type="term" value="F:transmembrane transporter activity"/>
    <property type="evidence" value="ECO:0007669"/>
    <property type="project" value="TreeGrafter"/>
</dbReference>
<dbReference type="CDD" id="cd03255">
    <property type="entry name" value="ABC_MJ0796_LolCDE_FtsE"/>
    <property type="match status" value="1"/>
</dbReference>
<dbReference type="FunFam" id="3.40.50.300:FF:000032">
    <property type="entry name" value="Export ABC transporter ATP-binding protein"/>
    <property type="match status" value="1"/>
</dbReference>
<dbReference type="Gene3D" id="3.40.50.300">
    <property type="entry name" value="P-loop containing nucleotide triphosphate hydrolases"/>
    <property type="match status" value="1"/>
</dbReference>
<dbReference type="InterPro" id="IPR003593">
    <property type="entry name" value="AAA+_ATPase"/>
</dbReference>
<dbReference type="InterPro" id="IPR003838">
    <property type="entry name" value="ABC3_permease_C"/>
</dbReference>
<dbReference type="InterPro" id="IPR003439">
    <property type="entry name" value="ABC_transporter-like_ATP-bd"/>
</dbReference>
<dbReference type="InterPro" id="IPR017871">
    <property type="entry name" value="ABC_transporter-like_CS"/>
</dbReference>
<dbReference type="InterPro" id="IPR017911">
    <property type="entry name" value="MacB-like_ATP-bd"/>
</dbReference>
<dbReference type="InterPro" id="IPR025857">
    <property type="entry name" value="MacB_PCD"/>
</dbReference>
<dbReference type="InterPro" id="IPR050250">
    <property type="entry name" value="Macrolide_Exporter_MacB"/>
</dbReference>
<dbReference type="InterPro" id="IPR027417">
    <property type="entry name" value="P-loop_NTPase"/>
</dbReference>
<dbReference type="PANTHER" id="PTHR30572:SF14">
    <property type="entry name" value="MACROLIDE EXPORT ATP-BINDING_PERMEASE PROTEIN MACB"/>
    <property type="match status" value="1"/>
</dbReference>
<dbReference type="PANTHER" id="PTHR30572">
    <property type="entry name" value="MEMBRANE COMPONENT OF TRANSPORTER-RELATED"/>
    <property type="match status" value="1"/>
</dbReference>
<dbReference type="Pfam" id="PF00005">
    <property type="entry name" value="ABC_tran"/>
    <property type="match status" value="1"/>
</dbReference>
<dbReference type="Pfam" id="PF02687">
    <property type="entry name" value="FtsX"/>
    <property type="match status" value="1"/>
</dbReference>
<dbReference type="Pfam" id="PF12704">
    <property type="entry name" value="MacB_PCD"/>
    <property type="match status" value="1"/>
</dbReference>
<dbReference type="SMART" id="SM00382">
    <property type="entry name" value="AAA"/>
    <property type="match status" value="1"/>
</dbReference>
<dbReference type="SUPFAM" id="SSF52540">
    <property type="entry name" value="P-loop containing nucleoside triphosphate hydrolases"/>
    <property type="match status" value="1"/>
</dbReference>
<dbReference type="PROSITE" id="PS00211">
    <property type="entry name" value="ABC_TRANSPORTER_1"/>
    <property type="match status" value="1"/>
</dbReference>
<dbReference type="PROSITE" id="PS50893">
    <property type="entry name" value="ABC_TRANSPORTER_2"/>
    <property type="match status" value="1"/>
</dbReference>
<dbReference type="PROSITE" id="PS51267">
    <property type="entry name" value="MACB"/>
    <property type="match status" value="1"/>
</dbReference>
<keyword id="KW-0067">ATP-binding</keyword>
<keyword id="KW-0997">Cell inner membrane</keyword>
<keyword id="KW-1003">Cell membrane</keyword>
<keyword id="KW-0472">Membrane</keyword>
<keyword id="KW-0547">Nucleotide-binding</keyword>
<keyword id="KW-1278">Translocase</keyword>
<keyword id="KW-0812">Transmembrane</keyword>
<keyword id="KW-1133">Transmembrane helix</keyword>
<keyword id="KW-0813">Transport</keyword>
<sequence>MQTPLIDLRNIRKSYGGGDSPQVDVLRGIDLSIHAGEFVAIVGASGSGKSTLMNILGCLDRPTSGEYLFAGENVAHLDSDELAWLRREAFGFVFQGYHLIPSASAQENVEMPAIYAGTPTAERHTRAAALLERLGLASRSGNRPHQLSGGQQQRVSIARALMNGGHIILADEPTGALDSHSGAEVMALLDELASQGHVVILITHDREVAARAKRIIEIRDGEIISDTATSDPSVQLSANAGALQAVDLRQRLADGSEPTGAWKGELLEAIQAAWRVMWINRFRTALTLLGIIIGVASVVVMLAVGEGSKRQVMAQMGAFGSNIIYLSGYSPNPRTPEGIVTLDDVAALANLPQVKRIMAVNGAKAGVRFGNADYMSYVGGNDTNFPEIFNWPVAQGSYFSEADESSAAAVAVIGHKVREKLLKDVANPIGQYILIENVPFQVVGVLSEKGASSGDSDSDDRIAVPYSAASIRLFGDHNPQYVAIAAADASRVKQTEQEIDELMLRMHGGKRDFELTNNAAMIQAEARTQNTLSLMLGAIAAISLLVGGIGVMNIMLMTVRERTREIGIRMATGARQRDILRQFLTEAVMLSVVGGLAGIGVALIIGGILILSEVAVAFSLAAVLGAFACALVTGVIFGFMPARKAARLDPVTALTSE</sequence>
<proteinExistence type="inferred from homology"/>
<reference key="1">
    <citation type="journal article" date="2005" name="Nat. Biotechnol.">
        <title>Complete genome sequence of the plant commensal Pseudomonas fluorescens Pf-5.</title>
        <authorList>
            <person name="Paulsen I.T."/>
            <person name="Press C.M."/>
            <person name="Ravel J."/>
            <person name="Kobayashi D.Y."/>
            <person name="Myers G.S.A."/>
            <person name="Mavrodi D.V."/>
            <person name="DeBoy R.T."/>
            <person name="Seshadri R."/>
            <person name="Ren Q."/>
            <person name="Madupu R."/>
            <person name="Dodson R.J."/>
            <person name="Durkin A.S."/>
            <person name="Brinkac L.M."/>
            <person name="Daugherty S.C."/>
            <person name="Sullivan S.A."/>
            <person name="Rosovitz M.J."/>
            <person name="Gwinn M.L."/>
            <person name="Zhou L."/>
            <person name="Schneider D.J."/>
            <person name="Cartinhour S.W."/>
            <person name="Nelson W.C."/>
            <person name="Weidman J."/>
            <person name="Watkins K."/>
            <person name="Tran K."/>
            <person name="Khouri H."/>
            <person name="Pierson E.A."/>
            <person name="Pierson L.S. III"/>
            <person name="Thomashow L.S."/>
            <person name="Loper J.E."/>
        </authorList>
    </citation>
    <scope>NUCLEOTIDE SEQUENCE [LARGE SCALE GENOMIC DNA]</scope>
    <source>
        <strain>ATCC BAA-477 / NRRL B-23932 / Pf-5</strain>
    </source>
</reference>
<protein>
    <recommendedName>
        <fullName evidence="1">Pyoverdine export ATP-binding/permease protein PvdT</fullName>
        <ecNumber evidence="1">7.6.2.-</ecNumber>
    </recommendedName>
</protein>
<feature type="chain" id="PRO_0000269958" description="Pyoverdine export ATP-binding/permease protein PvdT">
    <location>
        <begin position="1"/>
        <end position="657"/>
    </location>
</feature>
<feature type="transmembrane region" description="Helical" evidence="3">
    <location>
        <begin position="285"/>
        <end position="305"/>
    </location>
</feature>
<feature type="transmembrane region" description="Helical" evidence="3">
    <location>
        <begin position="532"/>
        <end position="552"/>
    </location>
</feature>
<feature type="transmembrane region" description="Helical" evidence="3">
    <location>
        <begin position="590"/>
        <end position="610"/>
    </location>
</feature>
<feature type="transmembrane region" description="Helical" evidence="3">
    <location>
        <begin position="620"/>
        <end position="640"/>
    </location>
</feature>
<feature type="domain" description="ABC transporter" evidence="4">
    <location>
        <begin position="6"/>
        <end position="245"/>
    </location>
</feature>
<feature type="binding site" evidence="4">
    <location>
        <begin position="43"/>
        <end position="50"/>
    </location>
    <ligand>
        <name>ATP</name>
        <dbReference type="ChEBI" id="CHEBI:30616"/>
    </ligand>
</feature>
<comment type="function">
    <text evidence="1 2">Part of the tripartite efflux system PvdRT-OpmQ required for the secretion into the extracellular milieu of the siderophore pyoverdine (PVD), which is involved in iron acquisition (By similarity). This subunit binds PVD and drives its secretion by hydrolyzing ATP (By similarity). The system is responsible for export of newly synthesized PVD after the final steps of biosynthesis have taken place in the periplasm (By similarity). It is also responsible for recycling of PVD after internalization of ferri-PVD into the periplasm by the outer-membrane receptor FpvA and release of iron from PVD, thus making PVD available for new cycles of iron uptake (By similarity).</text>
</comment>
<comment type="subunit">
    <text evidence="2">Part of the tripartite efflux system PvdRT-OpmQ, which is composed of an inner membrane component with both ATPase and permease domains, PvdT, a periplasmic membrane fusion protein, PvdR, and an outer membrane component, OpmQ.</text>
</comment>
<comment type="subcellular location">
    <subcellularLocation>
        <location evidence="1">Cell inner membrane</location>
        <topology evidence="3">Multi-pass membrane protein</topology>
    </subcellularLocation>
</comment>
<comment type="similarity">
    <text evidence="5">Belongs to the ABC transporter superfamily. Macrolide exporter (TC 3.A.1.122) family.</text>
</comment>